<comment type="subcellular location">
    <subcellularLocation>
        <location evidence="2">Cell membrane</location>
        <topology evidence="2">Multi-pass membrane protein</topology>
    </subcellularLocation>
</comment>
<comment type="similarity">
    <text evidence="2">Belongs to the UPF0252 family.</text>
</comment>
<gene>
    <name type="ordered locus">MJECL39</name>
</gene>
<protein>
    <recommendedName>
        <fullName>UPF0252 protein MJECL39</fullName>
    </recommendedName>
</protein>
<accession>Q60294</accession>
<keyword id="KW-1003">Cell membrane</keyword>
<keyword id="KW-0472">Membrane</keyword>
<keyword id="KW-0614">Plasmid</keyword>
<keyword id="KW-1185">Reference proteome</keyword>
<keyword id="KW-0812">Transmembrane</keyword>
<keyword id="KW-1133">Transmembrane helix</keyword>
<dbReference type="EMBL" id="L77118">
    <property type="protein sequence ID" value="AAC37108.1"/>
    <property type="molecule type" value="Genomic_DNA"/>
</dbReference>
<dbReference type="PIR" id="F64514">
    <property type="entry name" value="F64514"/>
</dbReference>
<dbReference type="RefSeq" id="WP_010890086.1">
    <property type="nucleotide sequence ID" value="NC_001732.1"/>
</dbReference>
<dbReference type="SMR" id="Q60294"/>
<dbReference type="FunCoup" id="Q60294">
    <property type="interactions" value="9"/>
</dbReference>
<dbReference type="PaxDb" id="243232-MJ_ECL39"/>
<dbReference type="EnsemblBacteria" id="AAC37108">
    <property type="protein sequence ID" value="AAC37108"/>
    <property type="gene ID" value="MJ_ECL39"/>
</dbReference>
<dbReference type="GeneID" id="1450821"/>
<dbReference type="KEGG" id="mja:MJ_ECL39"/>
<dbReference type="eggNOG" id="arCOG02164">
    <property type="taxonomic scope" value="Archaea"/>
</dbReference>
<dbReference type="HOGENOM" id="CLU_722835_0_0_2"/>
<dbReference type="InParanoid" id="Q60294"/>
<dbReference type="OrthoDB" id="86147at2157"/>
<dbReference type="Proteomes" id="UP000000805">
    <property type="component" value="Plasmid pDSM2661_1"/>
</dbReference>
<dbReference type="GO" id="GO:0005886">
    <property type="term" value="C:plasma membrane"/>
    <property type="evidence" value="ECO:0007669"/>
    <property type="project" value="UniProtKB-SubCell"/>
</dbReference>
<dbReference type="Gene3D" id="3.10.620.30">
    <property type="match status" value="1"/>
</dbReference>
<dbReference type="InterPro" id="IPR007562">
    <property type="entry name" value="Transglutaminase-like_domain"/>
</dbReference>
<dbReference type="Pfam" id="PF04473">
    <property type="entry name" value="DUF553"/>
    <property type="match status" value="1"/>
</dbReference>
<name>Y3539_METJA</name>
<sequence>MPILLEHIQLNDEDLKDTKHLAEILKYKNNSIKTIINVLEWEDSNIRYCYEKSNVYYFITFFIIVGLVWAIFPEVWLWCEQVFCISPTIHIIICCLYFIITIILFLFLCGVVGTFLHLWATFFTLSKCDSKILKLKEGLFTTLSLIWISTSLKTILKTKYAICRDYAKLTSAILHNLNIKHYFLVYPTHVAVAVKIDDYYYVIDQKLPIYKIDVWLKKLGKEKVKIYTPVDIYNSKLKFVEKYYKNENNLKSEISDDILRKIEEDVKKELQIKNAEQYNKKVEPIPVKLSIPIENYDEITHYSIVRVISKEIYNKFLTNIKNVSNIEIKKDEGKFAVNVYYEIPNSIPNSK</sequence>
<reference key="1">
    <citation type="journal article" date="1996" name="Science">
        <title>Complete genome sequence of the methanogenic archaeon, Methanococcus jannaschii.</title>
        <authorList>
            <person name="Bult C.J."/>
            <person name="White O."/>
            <person name="Olsen G.J."/>
            <person name="Zhou L."/>
            <person name="Fleischmann R.D."/>
            <person name="Sutton G.G."/>
            <person name="Blake J.A."/>
            <person name="FitzGerald L.M."/>
            <person name="Clayton R.A."/>
            <person name="Gocayne J.D."/>
            <person name="Kerlavage A.R."/>
            <person name="Dougherty B.A."/>
            <person name="Tomb J.-F."/>
            <person name="Adams M.D."/>
            <person name="Reich C.I."/>
            <person name="Overbeek R."/>
            <person name="Kirkness E.F."/>
            <person name="Weinstock K.G."/>
            <person name="Merrick J.M."/>
            <person name="Glodek A."/>
            <person name="Scott J.L."/>
            <person name="Geoghagen N.S.M."/>
            <person name="Weidman J.F."/>
            <person name="Fuhrmann J.L."/>
            <person name="Nguyen D."/>
            <person name="Utterback T.R."/>
            <person name="Kelley J.M."/>
            <person name="Peterson J.D."/>
            <person name="Sadow P.W."/>
            <person name="Hanna M.C."/>
            <person name="Cotton M.D."/>
            <person name="Roberts K.M."/>
            <person name="Hurst M.A."/>
            <person name="Kaine B.P."/>
            <person name="Borodovsky M."/>
            <person name="Klenk H.-P."/>
            <person name="Fraser C.M."/>
            <person name="Smith H.O."/>
            <person name="Woese C.R."/>
            <person name="Venter J.C."/>
        </authorList>
    </citation>
    <scope>NUCLEOTIDE SEQUENCE [LARGE SCALE GENOMIC DNA]</scope>
    <source>
        <strain>ATCC 43067 / DSM 2661 / JAL-1 / JCM 10045 / NBRC 100440</strain>
    </source>
</reference>
<geneLocation type="plasmid">
    <name>large ECE</name>
</geneLocation>
<feature type="chain" id="PRO_0000159556" description="UPF0252 protein MJECL39">
    <location>
        <begin position="1"/>
        <end position="351"/>
    </location>
</feature>
<feature type="transmembrane region" description="Helical" evidence="1">
    <location>
        <begin position="58"/>
        <end position="78"/>
    </location>
</feature>
<feature type="transmembrane region" description="Helical" evidence="1">
    <location>
        <begin position="91"/>
        <end position="111"/>
    </location>
</feature>
<organism>
    <name type="scientific">Methanocaldococcus jannaschii (strain ATCC 43067 / DSM 2661 / JAL-1 / JCM 10045 / NBRC 100440)</name>
    <name type="common">Methanococcus jannaschii</name>
    <dbReference type="NCBI Taxonomy" id="243232"/>
    <lineage>
        <taxon>Archaea</taxon>
        <taxon>Methanobacteriati</taxon>
        <taxon>Methanobacteriota</taxon>
        <taxon>Methanomada group</taxon>
        <taxon>Methanococci</taxon>
        <taxon>Methanococcales</taxon>
        <taxon>Methanocaldococcaceae</taxon>
        <taxon>Methanocaldococcus</taxon>
    </lineage>
</organism>
<evidence type="ECO:0000255" key="1"/>
<evidence type="ECO:0000305" key="2"/>
<proteinExistence type="inferred from homology"/>